<keyword id="KW-0009">Actin-binding</keyword>
<keyword id="KW-1185">Reference proteome</keyword>
<name>ADF2_ORYSJ</name>
<feature type="chain" id="PRO_0000278105" description="Actin-depolymerizing factor 2">
    <location>
        <begin position="1"/>
        <end position="145"/>
    </location>
</feature>
<feature type="domain" description="ADF-H" evidence="2">
    <location>
        <begin position="13"/>
        <end position="145"/>
    </location>
</feature>
<accession>Q9AY76</accession>
<accession>B7ELS2</accession>
<gene>
    <name type="primary">ADF2</name>
    <name type="ordered locus">Os03g0780400</name>
    <name type="ordered locus">LOC_Os03g56790</name>
    <name evidence="4" type="ORF">OsJ_12808</name>
    <name type="ORF">OSJNBa0091J19.11</name>
</gene>
<reference key="1">
    <citation type="journal article" date="2005" name="Genome Res.">
        <title>Sequence, annotation, and analysis of synteny between rice chromosome 3 and diverged grass species.</title>
        <authorList>
            <consortium name="The rice chromosome 3 sequencing consortium"/>
            <person name="Buell C.R."/>
            <person name="Yuan Q."/>
            <person name="Ouyang S."/>
            <person name="Liu J."/>
            <person name="Zhu W."/>
            <person name="Wang A."/>
            <person name="Maiti R."/>
            <person name="Haas B."/>
            <person name="Wortman J."/>
            <person name="Pertea M."/>
            <person name="Jones K.M."/>
            <person name="Kim M."/>
            <person name="Overton L."/>
            <person name="Tsitrin T."/>
            <person name="Fadrosh D."/>
            <person name="Bera J."/>
            <person name="Weaver B."/>
            <person name="Jin S."/>
            <person name="Johri S."/>
            <person name="Reardon M."/>
            <person name="Webb K."/>
            <person name="Hill J."/>
            <person name="Moffat K."/>
            <person name="Tallon L."/>
            <person name="Van Aken S."/>
            <person name="Lewis M."/>
            <person name="Utterback T."/>
            <person name="Feldblyum T."/>
            <person name="Zismann V."/>
            <person name="Iobst S."/>
            <person name="Hsiao J."/>
            <person name="de Vazeille A.R."/>
            <person name="Salzberg S.L."/>
            <person name="White O."/>
            <person name="Fraser C.M."/>
            <person name="Yu Y."/>
            <person name="Kim H."/>
            <person name="Rambo T."/>
            <person name="Currie J."/>
            <person name="Collura K."/>
            <person name="Kernodle-Thompson S."/>
            <person name="Wei F."/>
            <person name="Kudrna K."/>
            <person name="Ammiraju J.S.S."/>
            <person name="Luo M."/>
            <person name="Goicoechea J.L."/>
            <person name="Wing R.A."/>
            <person name="Henry D."/>
            <person name="Oates R."/>
            <person name="Palmer M."/>
            <person name="Pries G."/>
            <person name="Saski C."/>
            <person name="Simmons J."/>
            <person name="Soderlund C."/>
            <person name="Nelson W."/>
            <person name="de la Bastide M."/>
            <person name="Spiegel L."/>
            <person name="Nascimento L."/>
            <person name="Huang E."/>
            <person name="Preston R."/>
            <person name="Zutavern T."/>
            <person name="Palmer L."/>
            <person name="O'Shaughnessy A."/>
            <person name="Dike S."/>
            <person name="McCombie W.R."/>
            <person name="Minx P."/>
            <person name="Cordum H."/>
            <person name="Wilson R."/>
            <person name="Jin W."/>
            <person name="Lee H.R."/>
            <person name="Jiang J."/>
            <person name="Jackson S."/>
        </authorList>
    </citation>
    <scope>NUCLEOTIDE SEQUENCE [LARGE SCALE GENOMIC DNA]</scope>
    <source>
        <strain>cv. Nipponbare</strain>
    </source>
</reference>
<reference key="2">
    <citation type="journal article" date="2005" name="Nature">
        <title>The map-based sequence of the rice genome.</title>
        <authorList>
            <consortium name="International rice genome sequencing project (IRGSP)"/>
        </authorList>
    </citation>
    <scope>NUCLEOTIDE SEQUENCE [LARGE SCALE GENOMIC DNA]</scope>
    <source>
        <strain>cv. Nipponbare</strain>
    </source>
</reference>
<reference key="3">
    <citation type="journal article" date="2008" name="Nucleic Acids Res.">
        <title>The rice annotation project database (RAP-DB): 2008 update.</title>
        <authorList>
            <consortium name="The rice annotation project (RAP)"/>
        </authorList>
    </citation>
    <scope>GENOME REANNOTATION</scope>
    <source>
        <strain>cv. Nipponbare</strain>
    </source>
</reference>
<reference key="4">
    <citation type="journal article" date="2013" name="Rice">
        <title>Improvement of the Oryza sativa Nipponbare reference genome using next generation sequence and optical map data.</title>
        <authorList>
            <person name="Kawahara Y."/>
            <person name="de la Bastide M."/>
            <person name="Hamilton J.P."/>
            <person name="Kanamori H."/>
            <person name="McCombie W.R."/>
            <person name="Ouyang S."/>
            <person name="Schwartz D.C."/>
            <person name="Tanaka T."/>
            <person name="Wu J."/>
            <person name="Zhou S."/>
            <person name="Childs K.L."/>
            <person name="Davidson R.M."/>
            <person name="Lin H."/>
            <person name="Quesada-Ocampo L."/>
            <person name="Vaillancourt B."/>
            <person name="Sakai H."/>
            <person name="Lee S.S."/>
            <person name="Kim J."/>
            <person name="Numa H."/>
            <person name="Itoh T."/>
            <person name="Buell C.R."/>
            <person name="Matsumoto T."/>
        </authorList>
    </citation>
    <scope>GENOME REANNOTATION</scope>
    <source>
        <strain>cv. Nipponbare</strain>
    </source>
</reference>
<reference key="5">
    <citation type="journal article" date="2005" name="PLoS Biol.">
        <title>The genomes of Oryza sativa: a history of duplications.</title>
        <authorList>
            <person name="Yu J."/>
            <person name="Wang J."/>
            <person name="Lin W."/>
            <person name="Li S."/>
            <person name="Li H."/>
            <person name="Zhou J."/>
            <person name="Ni P."/>
            <person name="Dong W."/>
            <person name="Hu S."/>
            <person name="Zeng C."/>
            <person name="Zhang J."/>
            <person name="Zhang Y."/>
            <person name="Li R."/>
            <person name="Xu Z."/>
            <person name="Li S."/>
            <person name="Li X."/>
            <person name="Zheng H."/>
            <person name="Cong L."/>
            <person name="Lin L."/>
            <person name="Yin J."/>
            <person name="Geng J."/>
            <person name="Li G."/>
            <person name="Shi J."/>
            <person name="Liu J."/>
            <person name="Lv H."/>
            <person name="Li J."/>
            <person name="Wang J."/>
            <person name="Deng Y."/>
            <person name="Ran L."/>
            <person name="Shi X."/>
            <person name="Wang X."/>
            <person name="Wu Q."/>
            <person name="Li C."/>
            <person name="Ren X."/>
            <person name="Wang J."/>
            <person name="Wang X."/>
            <person name="Li D."/>
            <person name="Liu D."/>
            <person name="Zhang X."/>
            <person name="Ji Z."/>
            <person name="Zhao W."/>
            <person name="Sun Y."/>
            <person name="Zhang Z."/>
            <person name="Bao J."/>
            <person name="Han Y."/>
            <person name="Dong L."/>
            <person name="Ji J."/>
            <person name="Chen P."/>
            <person name="Wu S."/>
            <person name="Liu J."/>
            <person name="Xiao Y."/>
            <person name="Bu D."/>
            <person name="Tan J."/>
            <person name="Yang L."/>
            <person name="Ye C."/>
            <person name="Zhang J."/>
            <person name="Xu J."/>
            <person name="Zhou Y."/>
            <person name="Yu Y."/>
            <person name="Zhang B."/>
            <person name="Zhuang S."/>
            <person name="Wei H."/>
            <person name="Liu B."/>
            <person name="Lei M."/>
            <person name="Yu H."/>
            <person name="Li Y."/>
            <person name="Xu H."/>
            <person name="Wei S."/>
            <person name="He X."/>
            <person name="Fang L."/>
            <person name="Zhang Z."/>
            <person name="Zhang Y."/>
            <person name="Huang X."/>
            <person name="Su Z."/>
            <person name="Tong W."/>
            <person name="Li J."/>
            <person name="Tong Z."/>
            <person name="Li S."/>
            <person name="Ye J."/>
            <person name="Wang L."/>
            <person name="Fang L."/>
            <person name="Lei T."/>
            <person name="Chen C.-S."/>
            <person name="Chen H.-C."/>
            <person name="Xu Z."/>
            <person name="Li H."/>
            <person name="Huang H."/>
            <person name="Zhang F."/>
            <person name="Xu H."/>
            <person name="Li N."/>
            <person name="Zhao C."/>
            <person name="Li S."/>
            <person name="Dong L."/>
            <person name="Huang Y."/>
            <person name="Li L."/>
            <person name="Xi Y."/>
            <person name="Qi Q."/>
            <person name="Li W."/>
            <person name="Zhang B."/>
            <person name="Hu W."/>
            <person name="Zhang Y."/>
            <person name="Tian X."/>
            <person name="Jiao Y."/>
            <person name="Liang X."/>
            <person name="Jin J."/>
            <person name="Gao L."/>
            <person name="Zheng W."/>
            <person name="Hao B."/>
            <person name="Liu S.-M."/>
            <person name="Wang W."/>
            <person name="Yuan L."/>
            <person name="Cao M."/>
            <person name="McDermott J."/>
            <person name="Samudrala R."/>
            <person name="Wang J."/>
            <person name="Wong G.K.-S."/>
            <person name="Yang H."/>
        </authorList>
    </citation>
    <scope>NUCLEOTIDE SEQUENCE [LARGE SCALE GENOMIC DNA]</scope>
    <source>
        <strain>cv. Nipponbare</strain>
    </source>
</reference>
<reference key="6">
    <citation type="journal article" date="2003" name="Science">
        <title>Collection, mapping, and annotation of over 28,000 cDNA clones from japonica rice.</title>
        <authorList>
            <consortium name="The rice full-length cDNA consortium"/>
        </authorList>
    </citation>
    <scope>NUCLEOTIDE SEQUENCE [LARGE SCALE MRNA]</scope>
    <source>
        <strain>cv. Nipponbare</strain>
    </source>
</reference>
<reference key="7">
    <citation type="journal article" date="2006" name="J. Plant Physiol.">
        <title>Comparative study of rice and Arabidopsis actin-depolymerizing factors gene families.</title>
        <authorList>
            <person name="Feng Y."/>
            <person name="Liu Q."/>
            <person name="Xue Q."/>
        </authorList>
    </citation>
    <scope>GENE FAMILY</scope>
</reference>
<organism>
    <name type="scientific">Oryza sativa subsp. japonica</name>
    <name type="common">Rice</name>
    <dbReference type="NCBI Taxonomy" id="39947"/>
    <lineage>
        <taxon>Eukaryota</taxon>
        <taxon>Viridiplantae</taxon>
        <taxon>Streptophyta</taxon>
        <taxon>Embryophyta</taxon>
        <taxon>Tracheophyta</taxon>
        <taxon>Spermatophyta</taxon>
        <taxon>Magnoliopsida</taxon>
        <taxon>Liliopsida</taxon>
        <taxon>Poales</taxon>
        <taxon>Poaceae</taxon>
        <taxon>BOP clade</taxon>
        <taxon>Oryzoideae</taxon>
        <taxon>Oryzeae</taxon>
        <taxon>Oryzinae</taxon>
        <taxon>Oryza</taxon>
        <taxon>Oryza sativa</taxon>
    </lineage>
</organism>
<comment type="function">
    <text evidence="1">Actin-depolymerizing protein. Severs actin filaments (F-actin) and binds to actin monomers (By similarity).</text>
</comment>
<comment type="similarity">
    <text evidence="3">Belongs to the actin-binding proteins ADF family.</text>
</comment>
<dbReference type="EMBL" id="AC084320">
    <property type="protein sequence ID" value="AAK09235.1"/>
    <property type="molecule type" value="Genomic_DNA"/>
</dbReference>
<dbReference type="EMBL" id="DP000009">
    <property type="protein sequence ID" value="ABF99174.1"/>
    <property type="molecule type" value="Genomic_DNA"/>
</dbReference>
<dbReference type="EMBL" id="AP008209">
    <property type="protein sequence ID" value="BAF13363.1"/>
    <property type="molecule type" value="Genomic_DNA"/>
</dbReference>
<dbReference type="EMBL" id="AP014959">
    <property type="protein sequence ID" value="BAS86671.1"/>
    <property type="molecule type" value="Genomic_DNA"/>
</dbReference>
<dbReference type="EMBL" id="CM000140">
    <property type="protein sequence ID" value="EEE60036.1"/>
    <property type="molecule type" value="Genomic_DNA"/>
</dbReference>
<dbReference type="EMBL" id="AK073162">
    <property type="protein sequence ID" value="BAG93319.1"/>
    <property type="molecule type" value="mRNA"/>
</dbReference>
<dbReference type="RefSeq" id="XP_015630947.1">
    <property type="nucleotide sequence ID" value="XM_015775461.1"/>
</dbReference>
<dbReference type="SMR" id="Q9AY76"/>
<dbReference type="FunCoup" id="Q9AY76">
    <property type="interactions" value="2832"/>
</dbReference>
<dbReference type="STRING" id="39947.Q9AY76"/>
<dbReference type="PaxDb" id="39947-Q9AY76"/>
<dbReference type="EnsemblPlants" id="Os03t0780400-01">
    <property type="protein sequence ID" value="Os03t0780400-01"/>
    <property type="gene ID" value="Os03g0780400"/>
</dbReference>
<dbReference type="Gramene" id="Os03t0780400-01">
    <property type="protein sequence ID" value="Os03t0780400-01"/>
    <property type="gene ID" value="Os03g0780400"/>
</dbReference>
<dbReference type="KEGG" id="dosa:Os03g0780400"/>
<dbReference type="eggNOG" id="KOG1735">
    <property type="taxonomic scope" value="Eukaryota"/>
</dbReference>
<dbReference type="HOGENOM" id="CLU_094004_2_2_1"/>
<dbReference type="InParanoid" id="Q9AY76"/>
<dbReference type="OMA" id="ITFYSWS"/>
<dbReference type="OrthoDB" id="10249245at2759"/>
<dbReference type="Proteomes" id="UP000000763">
    <property type="component" value="Chromosome 3"/>
</dbReference>
<dbReference type="Proteomes" id="UP000007752">
    <property type="component" value="Chromosome 3"/>
</dbReference>
<dbReference type="Proteomes" id="UP000059680">
    <property type="component" value="Chromosome 3"/>
</dbReference>
<dbReference type="GO" id="GO:0015629">
    <property type="term" value="C:actin cytoskeleton"/>
    <property type="evidence" value="ECO:0000318"/>
    <property type="project" value="GO_Central"/>
</dbReference>
<dbReference type="GO" id="GO:0005737">
    <property type="term" value="C:cytoplasm"/>
    <property type="evidence" value="ECO:0000318"/>
    <property type="project" value="GO_Central"/>
</dbReference>
<dbReference type="GO" id="GO:0051015">
    <property type="term" value="F:actin filament binding"/>
    <property type="evidence" value="ECO:0000318"/>
    <property type="project" value="GO_Central"/>
</dbReference>
<dbReference type="GO" id="GO:0030042">
    <property type="term" value="P:actin filament depolymerization"/>
    <property type="evidence" value="ECO:0000318"/>
    <property type="project" value="GO_Central"/>
</dbReference>
<dbReference type="CDD" id="cd11286">
    <property type="entry name" value="ADF_cofilin_like"/>
    <property type="match status" value="1"/>
</dbReference>
<dbReference type="Gene3D" id="3.40.20.10">
    <property type="entry name" value="Severin"/>
    <property type="match status" value="1"/>
</dbReference>
<dbReference type="InterPro" id="IPR002108">
    <property type="entry name" value="ADF-H"/>
</dbReference>
<dbReference type="InterPro" id="IPR029006">
    <property type="entry name" value="ADF-H/Gelsolin-like_dom_sf"/>
</dbReference>
<dbReference type="InterPro" id="IPR017904">
    <property type="entry name" value="ADF/Cofilin"/>
</dbReference>
<dbReference type="PANTHER" id="PTHR11913">
    <property type="entry name" value="COFILIN-RELATED"/>
    <property type="match status" value="1"/>
</dbReference>
<dbReference type="Pfam" id="PF00241">
    <property type="entry name" value="Cofilin_ADF"/>
    <property type="match status" value="1"/>
</dbReference>
<dbReference type="SMART" id="SM00102">
    <property type="entry name" value="ADF"/>
    <property type="match status" value="1"/>
</dbReference>
<dbReference type="SUPFAM" id="SSF55753">
    <property type="entry name" value="Actin depolymerizing proteins"/>
    <property type="match status" value="1"/>
</dbReference>
<dbReference type="PROSITE" id="PS51263">
    <property type="entry name" value="ADF_H"/>
    <property type="match status" value="1"/>
</dbReference>
<sequence>MAFMRSHSNASSGMGVAPDIRDTFLELQMKKAFRYVIFKIEEKQKQVVVEKTGATTESYDDFLASLPENDCRYALYDFDFVTGENVQKSKIFFIAWSPSTSRIRAKMLYSTSKDRIKQELDGFHYEIQATDPTEVDLEVLRERAH</sequence>
<evidence type="ECO:0000250" key="1"/>
<evidence type="ECO:0000255" key="2">
    <source>
        <dbReference type="PROSITE-ProRule" id="PRU00599"/>
    </source>
</evidence>
<evidence type="ECO:0000305" key="3"/>
<evidence type="ECO:0000312" key="4">
    <source>
        <dbReference type="EMBL" id="EEE60036.1"/>
    </source>
</evidence>
<proteinExistence type="evidence at transcript level"/>
<protein>
    <recommendedName>
        <fullName>Actin-depolymerizing factor 2</fullName>
        <shortName>ADF-2</shortName>
        <shortName>OsADF2</shortName>
    </recommendedName>
</protein>